<protein>
    <recommendedName>
        <fullName evidence="1">Translational regulator CsrA</fullName>
    </recommendedName>
    <alternativeName>
        <fullName evidence="1">Carbon storage regulator</fullName>
    </alternativeName>
</protein>
<sequence length="67" mass="7457">MLILTRRVGETLMVGDDVTVTVLGVKGNQVRIGVNAPKEVAVHREEIYQRIQREKSAQAGESDHQDD</sequence>
<evidence type="ECO:0000255" key="1">
    <source>
        <dbReference type="HAMAP-Rule" id="MF_00167"/>
    </source>
</evidence>
<proteinExistence type="inferred from homology"/>
<accession>Q2SBU2</accession>
<name>CSRA_HAHCH</name>
<feature type="chain" id="PRO_1000023389" description="Translational regulator CsrA">
    <location>
        <begin position="1"/>
        <end position="67"/>
    </location>
</feature>
<gene>
    <name evidence="1" type="primary">csrA</name>
    <name type="ordered locus">HCH_05205</name>
</gene>
<reference key="1">
    <citation type="journal article" date="2005" name="Nucleic Acids Res.">
        <title>Genomic blueprint of Hahella chejuensis, a marine microbe producing an algicidal agent.</title>
        <authorList>
            <person name="Jeong H."/>
            <person name="Yim J.H."/>
            <person name="Lee C."/>
            <person name="Choi S.-H."/>
            <person name="Park Y.K."/>
            <person name="Yoon S.H."/>
            <person name="Hur C.-G."/>
            <person name="Kang H.-Y."/>
            <person name="Kim D."/>
            <person name="Lee H.H."/>
            <person name="Park K.H."/>
            <person name="Park S.-H."/>
            <person name="Park H.-S."/>
            <person name="Lee H.K."/>
            <person name="Oh T.K."/>
            <person name="Kim J.F."/>
        </authorList>
    </citation>
    <scope>NUCLEOTIDE SEQUENCE [LARGE SCALE GENOMIC DNA]</scope>
    <source>
        <strain>KCTC 2396</strain>
    </source>
</reference>
<comment type="function">
    <text evidence="1">A key translational regulator that binds mRNA to regulate translation initiation and/or mRNA stability. Mediates global changes in gene expression, shifting from rapid growth to stress survival by linking envelope stress, the stringent response and the catabolite repression systems. Usually binds in the 5'-UTR; binding at or near the Shine-Dalgarno sequence prevents ribosome-binding, repressing translation, binding elsewhere in the 5'-UTR can activate translation and/or stabilize the mRNA. Its function is antagonized by small RNA(s).</text>
</comment>
<comment type="subunit">
    <text evidence="1">Homodimer; the beta-strands of each monomer intercalate to form a hydrophobic core, while the alpha-helices form wings that extend away from the core.</text>
</comment>
<comment type="subcellular location">
    <subcellularLocation>
        <location evidence="1">Cytoplasm</location>
    </subcellularLocation>
</comment>
<comment type="similarity">
    <text evidence="1">Belongs to the CsrA/RsmA family.</text>
</comment>
<organism>
    <name type="scientific">Hahella chejuensis (strain KCTC 2396)</name>
    <dbReference type="NCBI Taxonomy" id="349521"/>
    <lineage>
        <taxon>Bacteria</taxon>
        <taxon>Pseudomonadati</taxon>
        <taxon>Pseudomonadota</taxon>
        <taxon>Gammaproteobacteria</taxon>
        <taxon>Oceanospirillales</taxon>
        <taxon>Hahellaceae</taxon>
        <taxon>Hahella</taxon>
    </lineage>
</organism>
<dbReference type="EMBL" id="CP000155">
    <property type="protein sequence ID" value="ABC31882.1"/>
    <property type="molecule type" value="Genomic_DNA"/>
</dbReference>
<dbReference type="RefSeq" id="WP_011398946.1">
    <property type="nucleotide sequence ID" value="NC_007645.1"/>
</dbReference>
<dbReference type="SMR" id="Q2SBU2"/>
<dbReference type="STRING" id="349521.HCH_05205"/>
<dbReference type="KEGG" id="hch:HCH_05205"/>
<dbReference type="eggNOG" id="COG1551">
    <property type="taxonomic scope" value="Bacteria"/>
</dbReference>
<dbReference type="HOGENOM" id="CLU_164837_2_1_6"/>
<dbReference type="OrthoDB" id="9809061at2"/>
<dbReference type="Proteomes" id="UP000000238">
    <property type="component" value="Chromosome"/>
</dbReference>
<dbReference type="GO" id="GO:0005829">
    <property type="term" value="C:cytosol"/>
    <property type="evidence" value="ECO:0007669"/>
    <property type="project" value="TreeGrafter"/>
</dbReference>
<dbReference type="GO" id="GO:0048027">
    <property type="term" value="F:mRNA 5'-UTR binding"/>
    <property type="evidence" value="ECO:0007669"/>
    <property type="project" value="UniProtKB-UniRule"/>
</dbReference>
<dbReference type="GO" id="GO:0006402">
    <property type="term" value="P:mRNA catabolic process"/>
    <property type="evidence" value="ECO:0007669"/>
    <property type="project" value="InterPro"/>
</dbReference>
<dbReference type="GO" id="GO:0045947">
    <property type="term" value="P:negative regulation of translational initiation"/>
    <property type="evidence" value="ECO:0007669"/>
    <property type="project" value="UniProtKB-UniRule"/>
</dbReference>
<dbReference type="GO" id="GO:0045948">
    <property type="term" value="P:positive regulation of translational initiation"/>
    <property type="evidence" value="ECO:0007669"/>
    <property type="project" value="UniProtKB-UniRule"/>
</dbReference>
<dbReference type="GO" id="GO:0006109">
    <property type="term" value="P:regulation of carbohydrate metabolic process"/>
    <property type="evidence" value="ECO:0007669"/>
    <property type="project" value="UniProtKB-UniRule"/>
</dbReference>
<dbReference type="FunFam" id="2.60.40.4380:FF:000001">
    <property type="entry name" value="Translational regulator CsrA"/>
    <property type="match status" value="1"/>
</dbReference>
<dbReference type="Gene3D" id="2.60.40.4380">
    <property type="entry name" value="Translational regulator CsrA"/>
    <property type="match status" value="1"/>
</dbReference>
<dbReference type="HAMAP" id="MF_00167">
    <property type="entry name" value="CsrA"/>
    <property type="match status" value="1"/>
</dbReference>
<dbReference type="InterPro" id="IPR003751">
    <property type="entry name" value="CsrA"/>
</dbReference>
<dbReference type="InterPro" id="IPR036107">
    <property type="entry name" value="CsrA_sf"/>
</dbReference>
<dbReference type="NCBIfam" id="TIGR00202">
    <property type="entry name" value="csrA"/>
    <property type="match status" value="1"/>
</dbReference>
<dbReference type="NCBIfam" id="NF002469">
    <property type="entry name" value="PRK01712.1"/>
    <property type="match status" value="1"/>
</dbReference>
<dbReference type="PANTHER" id="PTHR34984">
    <property type="entry name" value="CARBON STORAGE REGULATOR"/>
    <property type="match status" value="1"/>
</dbReference>
<dbReference type="PANTHER" id="PTHR34984:SF1">
    <property type="entry name" value="CARBON STORAGE REGULATOR"/>
    <property type="match status" value="1"/>
</dbReference>
<dbReference type="Pfam" id="PF02599">
    <property type="entry name" value="CsrA"/>
    <property type="match status" value="1"/>
</dbReference>
<dbReference type="SUPFAM" id="SSF117130">
    <property type="entry name" value="CsrA-like"/>
    <property type="match status" value="1"/>
</dbReference>
<keyword id="KW-0010">Activator</keyword>
<keyword id="KW-0963">Cytoplasm</keyword>
<keyword id="KW-1185">Reference proteome</keyword>
<keyword id="KW-0678">Repressor</keyword>
<keyword id="KW-0694">RNA-binding</keyword>
<keyword id="KW-0810">Translation regulation</keyword>